<gene>
    <name evidence="1" type="primary">smpB</name>
    <name type="ordered locus">Cbei_0634</name>
</gene>
<evidence type="ECO:0000255" key="1">
    <source>
        <dbReference type="HAMAP-Rule" id="MF_00023"/>
    </source>
</evidence>
<reference key="1">
    <citation type="submission" date="2007-06" db="EMBL/GenBank/DDBJ databases">
        <title>Complete sequence of Clostridium beijerinckii NCIMB 8052.</title>
        <authorList>
            <consortium name="US DOE Joint Genome Institute"/>
            <person name="Copeland A."/>
            <person name="Lucas S."/>
            <person name="Lapidus A."/>
            <person name="Barry K."/>
            <person name="Detter J.C."/>
            <person name="Glavina del Rio T."/>
            <person name="Hammon N."/>
            <person name="Israni S."/>
            <person name="Dalin E."/>
            <person name="Tice H."/>
            <person name="Pitluck S."/>
            <person name="Sims D."/>
            <person name="Brettin T."/>
            <person name="Bruce D."/>
            <person name="Tapia R."/>
            <person name="Brainard J."/>
            <person name="Schmutz J."/>
            <person name="Larimer F."/>
            <person name="Land M."/>
            <person name="Hauser L."/>
            <person name="Kyrpides N."/>
            <person name="Mikhailova N."/>
            <person name="Bennet G."/>
            <person name="Cann I."/>
            <person name="Chen J.-S."/>
            <person name="Contreras A.L."/>
            <person name="Jones D."/>
            <person name="Kashket E."/>
            <person name="Mitchell W."/>
            <person name="Stoddard S."/>
            <person name="Schwarz W."/>
            <person name="Qureshi N."/>
            <person name="Young M."/>
            <person name="Shi Z."/>
            <person name="Ezeji T."/>
            <person name="White B."/>
            <person name="Blaschek H."/>
            <person name="Richardson P."/>
        </authorList>
    </citation>
    <scope>NUCLEOTIDE SEQUENCE [LARGE SCALE GENOMIC DNA]</scope>
    <source>
        <strain>ATCC 51743 / NCIMB 8052</strain>
    </source>
</reference>
<accession>A6LR41</accession>
<organism>
    <name type="scientific">Clostridium beijerinckii (strain ATCC 51743 / NCIMB 8052)</name>
    <name type="common">Clostridium acetobutylicum</name>
    <dbReference type="NCBI Taxonomy" id="290402"/>
    <lineage>
        <taxon>Bacteria</taxon>
        <taxon>Bacillati</taxon>
        <taxon>Bacillota</taxon>
        <taxon>Clostridia</taxon>
        <taxon>Eubacteriales</taxon>
        <taxon>Clostridiaceae</taxon>
        <taxon>Clostridium</taxon>
    </lineage>
</organism>
<name>SSRP_CLOB8</name>
<comment type="function">
    <text evidence="1">Required for rescue of stalled ribosomes mediated by trans-translation. Binds to transfer-messenger RNA (tmRNA), required for stable association of tmRNA with ribosomes. tmRNA and SmpB together mimic tRNA shape, replacing the anticodon stem-loop with SmpB. tmRNA is encoded by the ssrA gene; the 2 termini fold to resemble tRNA(Ala) and it encodes a 'tag peptide', a short internal open reading frame. During trans-translation Ala-aminoacylated tmRNA acts like a tRNA, entering the A-site of stalled ribosomes, displacing the stalled mRNA. The ribosome then switches to translate the ORF on the tmRNA; the nascent peptide is terminated with the 'tag peptide' encoded by the tmRNA and targeted for degradation. The ribosome is freed to recommence translation, which seems to be the essential function of trans-translation.</text>
</comment>
<comment type="subcellular location">
    <subcellularLocation>
        <location evidence="1">Cytoplasm</location>
    </subcellularLocation>
    <text evidence="1">The tmRNA-SmpB complex associates with stalled 70S ribosomes.</text>
</comment>
<comment type="similarity">
    <text evidence="1">Belongs to the SmpB family.</text>
</comment>
<proteinExistence type="inferred from homology"/>
<keyword id="KW-0963">Cytoplasm</keyword>
<keyword id="KW-0694">RNA-binding</keyword>
<sequence length="156" mass="18172">MARKRNENSLAENRKARHDYFVEEAMEAGLVLVGTEVKSIRNGRVNLKDCYADIYNGEIFVKNMHISPYEQGNIFNVDPLRERKLLLHRDEIRRLDGLVSRDGYTLIPLSLYLKDGKVKVALGVCKGKKNYDKRDSMLEKAHKRDMDRAIKEKNKY</sequence>
<protein>
    <recommendedName>
        <fullName evidence="1">SsrA-binding protein</fullName>
    </recommendedName>
    <alternativeName>
        <fullName evidence="1">Small protein B</fullName>
    </alternativeName>
</protein>
<feature type="chain" id="PRO_1000074347" description="SsrA-binding protein">
    <location>
        <begin position="1"/>
        <end position="156"/>
    </location>
</feature>
<dbReference type="EMBL" id="CP000721">
    <property type="protein sequence ID" value="ABR32821.1"/>
    <property type="molecule type" value="Genomic_DNA"/>
</dbReference>
<dbReference type="RefSeq" id="WP_011967982.1">
    <property type="nucleotide sequence ID" value="NC_009617.1"/>
</dbReference>
<dbReference type="SMR" id="A6LR41"/>
<dbReference type="GeneID" id="66343539"/>
<dbReference type="KEGG" id="cbe:Cbei_0634"/>
<dbReference type="eggNOG" id="COG0691">
    <property type="taxonomic scope" value="Bacteria"/>
</dbReference>
<dbReference type="HOGENOM" id="CLU_108953_0_0_9"/>
<dbReference type="Proteomes" id="UP000000565">
    <property type="component" value="Chromosome"/>
</dbReference>
<dbReference type="GO" id="GO:0005829">
    <property type="term" value="C:cytosol"/>
    <property type="evidence" value="ECO:0007669"/>
    <property type="project" value="TreeGrafter"/>
</dbReference>
<dbReference type="GO" id="GO:0003723">
    <property type="term" value="F:RNA binding"/>
    <property type="evidence" value="ECO:0007669"/>
    <property type="project" value="UniProtKB-UniRule"/>
</dbReference>
<dbReference type="GO" id="GO:0070929">
    <property type="term" value="P:trans-translation"/>
    <property type="evidence" value="ECO:0007669"/>
    <property type="project" value="UniProtKB-UniRule"/>
</dbReference>
<dbReference type="CDD" id="cd09294">
    <property type="entry name" value="SmpB"/>
    <property type="match status" value="1"/>
</dbReference>
<dbReference type="Gene3D" id="2.40.280.10">
    <property type="match status" value="1"/>
</dbReference>
<dbReference type="HAMAP" id="MF_00023">
    <property type="entry name" value="SmpB"/>
    <property type="match status" value="1"/>
</dbReference>
<dbReference type="InterPro" id="IPR023620">
    <property type="entry name" value="SmpB"/>
</dbReference>
<dbReference type="InterPro" id="IPR000037">
    <property type="entry name" value="SsrA-bd_prot"/>
</dbReference>
<dbReference type="InterPro" id="IPR020081">
    <property type="entry name" value="SsrA-bd_prot_CS"/>
</dbReference>
<dbReference type="NCBIfam" id="NF003843">
    <property type="entry name" value="PRK05422.1"/>
    <property type="match status" value="1"/>
</dbReference>
<dbReference type="NCBIfam" id="TIGR00086">
    <property type="entry name" value="smpB"/>
    <property type="match status" value="1"/>
</dbReference>
<dbReference type="PANTHER" id="PTHR30308:SF2">
    <property type="entry name" value="SSRA-BINDING PROTEIN"/>
    <property type="match status" value="1"/>
</dbReference>
<dbReference type="PANTHER" id="PTHR30308">
    <property type="entry name" value="TMRNA-BINDING COMPONENT OF TRANS-TRANSLATION TAGGING COMPLEX"/>
    <property type="match status" value="1"/>
</dbReference>
<dbReference type="Pfam" id="PF01668">
    <property type="entry name" value="SmpB"/>
    <property type="match status" value="1"/>
</dbReference>
<dbReference type="SUPFAM" id="SSF74982">
    <property type="entry name" value="Small protein B (SmpB)"/>
    <property type="match status" value="1"/>
</dbReference>
<dbReference type="PROSITE" id="PS01317">
    <property type="entry name" value="SSRP"/>
    <property type="match status" value="1"/>
</dbReference>